<comment type="function">
    <text evidence="1">Ribonucleoside-diphosphate reductase holoenzyme provides the precursors necessary for viral DNA synthesis. Allows virus growth in non-dividing cells, as well as reactivation from latency in infected hosts. Catalyzes the biosynthesis of deoxyribonucleotides from the corresponding ribonucleotides.</text>
</comment>
<comment type="catalytic activity">
    <reaction evidence="1">
        <text>a 2'-deoxyribonucleoside 5'-diphosphate + [thioredoxin]-disulfide + H2O = a ribonucleoside 5'-diphosphate + [thioredoxin]-dithiol</text>
        <dbReference type="Rhea" id="RHEA:23252"/>
        <dbReference type="Rhea" id="RHEA-COMP:10698"/>
        <dbReference type="Rhea" id="RHEA-COMP:10700"/>
        <dbReference type="ChEBI" id="CHEBI:15377"/>
        <dbReference type="ChEBI" id="CHEBI:29950"/>
        <dbReference type="ChEBI" id="CHEBI:50058"/>
        <dbReference type="ChEBI" id="CHEBI:57930"/>
        <dbReference type="ChEBI" id="CHEBI:73316"/>
        <dbReference type="EC" id="1.17.4.1"/>
    </reaction>
</comment>
<comment type="subunit">
    <text evidence="1">Heterotetramer composed of a homodimer of the large subunit (R1) and a homodimer of the small subunit (R2). Larger multisubunit protein complex are also active, composed of (R1)n(R2)n.</text>
</comment>
<comment type="similarity">
    <text evidence="1">Belongs to the ribonucleoside diphosphate reductase large chain family.</text>
</comment>
<organismHost>
    <name type="scientific">Saimiri sciureus</name>
    <name type="common">Common squirrel monkey</name>
    <dbReference type="NCBI Taxonomy" id="9521"/>
</organismHost>
<name>RIR1_SHV21</name>
<feature type="chain" id="PRO_0000187243" description="Ribonucleoside-diphosphate reductase large subunit">
    <location>
        <begin position="1"/>
        <end position="767"/>
    </location>
</feature>
<feature type="active site" description="Proton acceptor" evidence="1">
    <location>
        <position position="392"/>
    </location>
</feature>
<feature type="active site" description="Cysteine radical intermediate" evidence="1">
    <location>
        <position position="394"/>
    </location>
</feature>
<feature type="active site" description="Proton acceptor" evidence="1">
    <location>
        <position position="396"/>
    </location>
</feature>
<feature type="binding site" evidence="1">
    <location>
        <position position="176"/>
    </location>
    <ligand>
        <name>substrate</name>
    </ligand>
</feature>
<feature type="binding site" evidence="1">
    <location>
        <begin position="191"/>
        <end position="192"/>
    </location>
    <ligand>
        <name>substrate</name>
    </ligand>
</feature>
<feature type="binding site" evidence="1">
    <location>
        <position position="222"/>
    </location>
    <ligand>
        <name>substrate</name>
    </ligand>
</feature>
<feature type="binding site" evidence="1">
    <location>
        <begin position="392"/>
        <end position="396"/>
    </location>
    <ligand>
        <name>substrate</name>
    </ligand>
</feature>
<feature type="binding site" evidence="1">
    <location>
        <begin position="578"/>
        <end position="582"/>
    </location>
    <ligand>
        <name>substrate</name>
    </ligand>
</feature>
<feature type="site" description="Important for hydrogen atom transfer" evidence="1">
    <location>
        <position position="192"/>
    </location>
</feature>
<feature type="site" description="Important for hydrogen atom transfer" evidence="1">
    <location>
        <position position="408"/>
    </location>
</feature>
<feature type="site" description="Important for electron transfer" evidence="1">
    <location>
        <position position="709"/>
    </location>
</feature>
<feature type="site" description="Important for electron transfer" evidence="1">
    <location>
        <position position="710"/>
    </location>
</feature>
<feature type="site" description="Interacts with thioredoxin/glutaredoxin" evidence="1">
    <location>
        <position position="763"/>
    </location>
</feature>
<feature type="site" description="Interacts with thioredoxin/glutaredoxin" evidence="1">
    <location>
        <position position="766"/>
    </location>
</feature>
<feature type="disulfide bond" description="Redox-active" evidence="1">
    <location>
        <begin position="192"/>
        <end position="408"/>
    </location>
</feature>
<gene>
    <name evidence="1" type="primary">RIR1</name>
    <name type="ordered locus">61</name>
    <name type="ordered locus">EELF2</name>
</gene>
<dbReference type="EC" id="1.17.4.1" evidence="1"/>
<dbReference type="EMBL" id="X64346">
    <property type="protein sequence ID" value="CAA45684.1"/>
    <property type="molecule type" value="Genomic_DNA"/>
</dbReference>
<dbReference type="EMBL" id="M86409">
    <property type="protein sequence ID" value="AAA46137.1"/>
    <property type="molecule type" value="Genomic_DNA"/>
</dbReference>
<dbReference type="RefSeq" id="NP_040263.1">
    <property type="nucleotide sequence ID" value="NC_001350.1"/>
</dbReference>
<dbReference type="SMR" id="Q01037"/>
<dbReference type="KEGG" id="vg:1682460"/>
<dbReference type="Proteomes" id="UP000000587">
    <property type="component" value="Segment"/>
</dbReference>
<dbReference type="GO" id="GO:0005524">
    <property type="term" value="F:ATP binding"/>
    <property type="evidence" value="ECO:0007669"/>
    <property type="project" value="UniProtKB-UniRule"/>
</dbReference>
<dbReference type="GO" id="GO:0004748">
    <property type="term" value="F:ribonucleoside-diphosphate reductase activity, thioredoxin disulfide as acceptor"/>
    <property type="evidence" value="ECO:0007669"/>
    <property type="project" value="UniProtKB-UniRule"/>
</dbReference>
<dbReference type="GO" id="GO:0009263">
    <property type="term" value="P:deoxyribonucleotide biosynthetic process"/>
    <property type="evidence" value="ECO:0007669"/>
    <property type="project" value="InterPro"/>
</dbReference>
<dbReference type="GO" id="GO:0006260">
    <property type="term" value="P:DNA replication"/>
    <property type="evidence" value="ECO:0007669"/>
    <property type="project" value="UniProtKB-KW"/>
</dbReference>
<dbReference type="GO" id="GO:0016032">
    <property type="term" value="P:viral process"/>
    <property type="evidence" value="ECO:0007669"/>
    <property type="project" value="UniProtKB-UniRule"/>
</dbReference>
<dbReference type="Gene3D" id="3.20.70.20">
    <property type="match status" value="1"/>
</dbReference>
<dbReference type="HAMAP" id="MF_04026">
    <property type="entry name" value="HSV_RIR1"/>
    <property type="match status" value="1"/>
</dbReference>
<dbReference type="InterPro" id="IPR034717">
    <property type="entry name" value="HSV_RIR1"/>
</dbReference>
<dbReference type="InterPro" id="IPR013346">
    <property type="entry name" value="NrdE_NrdA_C"/>
</dbReference>
<dbReference type="InterPro" id="IPR000788">
    <property type="entry name" value="RNR_lg_C"/>
</dbReference>
<dbReference type="InterPro" id="IPR013509">
    <property type="entry name" value="RNR_lsu_N"/>
</dbReference>
<dbReference type="InterPro" id="IPR039718">
    <property type="entry name" value="Rrm1"/>
</dbReference>
<dbReference type="NCBIfam" id="TIGR02506">
    <property type="entry name" value="NrdE_NrdA"/>
    <property type="match status" value="1"/>
</dbReference>
<dbReference type="PANTHER" id="PTHR11573">
    <property type="entry name" value="RIBONUCLEOSIDE-DIPHOSPHATE REDUCTASE LARGE CHAIN"/>
    <property type="match status" value="1"/>
</dbReference>
<dbReference type="PANTHER" id="PTHR11573:SF6">
    <property type="entry name" value="RIBONUCLEOSIDE-DIPHOSPHATE REDUCTASE LARGE SUBUNIT"/>
    <property type="match status" value="1"/>
</dbReference>
<dbReference type="Pfam" id="PF02867">
    <property type="entry name" value="Ribonuc_red_lgC"/>
    <property type="match status" value="1"/>
</dbReference>
<dbReference type="Pfam" id="PF00317">
    <property type="entry name" value="Ribonuc_red_lgN"/>
    <property type="match status" value="1"/>
</dbReference>
<dbReference type="PRINTS" id="PR01183">
    <property type="entry name" value="RIBORDTASEM1"/>
</dbReference>
<dbReference type="SUPFAM" id="SSF51998">
    <property type="entry name" value="PFL-like glycyl radical enzymes"/>
    <property type="match status" value="1"/>
</dbReference>
<dbReference type="PROSITE" id="PS00089">
    <property type="entry name" value="RIBORED_LARGE"/>
    <property type="match status" value="1"/>
</dbReference>
<keyword id="KW-0067">ATP-binding</keyword>
<keyword id="KW-1015">Disulfide bond</keyword>
<keyword id="KW-0235">DNA replication</keyword>
<keyword id="KW-0244">Early protein</keyword>
<keyword id="KW-0547">Nucleotide-binding</keyword>
<keyword id="KW-0560">Oxidoreductase</keyword>
<keyword id="KW-1185">Reference proteome</keyword>
<sequence>MSQETIISNLIDMLKVSAGWDREANEISGRLFHKLMDMSSTETISQYMSLFGPLLEPHILEFIQNYEQEIDEVCLEYRASYDFMCLRNCGILPAKRFYDTYVLPPRTEMNGKYESIPHFFARIAAYCAWNCIMCEPLKDTLVYVQKRDWNVEIKTDMQIFKYFYKVISSQLVCCATPVMRSAGVAGENLSSCFIIAPTLDTEKSTISSIFGELAPLLASRSGVGVDVTKFSFGGKNIHSCLKLINAQVEFFNDKSVRPVSVATYIEVWHCQIHEFLSAKLPENPDRCNSIFQGVCVPSLFFKMYESDPNGLWYLFDPQDAPNLTRLYGLEFEEEYLRLVSEKKYKQSVTLKSLMFSLINTIIKTGSPYVISKEAMNKHHWYETQGEAINCSNLCAEIVQQPKQFTSTCNLANVCLPKCLNSSNFPYTCSNTAQFDFSKLEYAVQAAVFIINACILSPSPTSSATVGQRERSMGIGCHGLADVFSEMGYGYLDLESECLDRDIFETMYYTAVKTSSEICSVGKGQPFAGFRKSKLAHGVFHWATWDAMPQRVPMKQWIHLQDNIKKFGVFNSQFIALMPTAGTSQLTGYTDSFYPYFANMSSKVSNKEEIMKPNITFLKNVKPQDLCTVRFYGGDVSMMPEDVSTRYKHFLTAFDYCPEAQMRRASIRAPYVDQSQSLTLFLTEENVQSAKYLKDLLLLGFRLGLKTIMYYCRVKKTTKLLQLECLKLDEHTKKDAQIVLADLARELPDSHKTEDACPLDQSECIACQ</sequence>
<reference key="1">
    <citation type="journal article" date="1992" name="J. Virol.">
        <title>Primary structure of the herpesvirus saimiri genome.</title>
        <authorList>
            <person name="Albrecht J.-C."/>
            <person name="Nicholas J."/>
            <person name="Biller D."/>
            <person name="Cameron K.R."/>
            <person name="Biesinger B."/>
            <person name="Newman C."/>
            <person name="Wittmann S."/>
            <person name="Craxton M.A."/>
            <person name="Coleman H."/>
            <person name="Fleckenstein B."/>
            <person name="Honess R.W."/>
        </authorList>
    </citation>
    <scope>NUCLEOTIDE SEQUENCE [LARGE SCALE GENOMIC DNA]</scope>
</reference>
<reference key="2">
    <citation type="journal article" date="1992" name="Virology">
        <title>Analysis of nucleotide sequence of the rightmost 43 kbp of herpesvirus saimiri (HVS) L-DNA: general conservation of genetic organization between HVS and Epstein-Barr virus.</title>
        <authorList>
            <person name="Nicholas J."/>
            <person name="Cameron K.R."/>
            <person name="Coleman H."/>
            <person name="Newman C."/>
            <person name="Honess R.W."/>
        </authorList>
    </citation>
    <scope>NUCLEOTIDE SEQUENCE [GENOMIC DNA]</scope>
</reference>
<reference key="3">
    <citation type="journal article" date="2009" name="Trends Biochem. Sci.">
        <title>Tinkering with a viral ribonucleotide reductase.</title>
        <authorList>
            <person name="Lembo D."/>
            <person name="Brune W."/>
        </authorList>
    </citation>
    <scope>REVIEW</scope>
</reference>
<proteinExistence type="inferred from homology"/>
<protein>
    <recommendedName>
        <fullName evidence="1">Ribonucleoside-diphosphate reductase large subunit</fullName>
        <shortName evidence="1">R1</shortName>
        <ecNumber evidence="1">1.17.4.1</ecNumber>
    </recommendedName>
    <alternativeName>
        <fullName evidence="1">Ribonucleotide reductase large subunit</fullName>
    </alternativeName>
</protein>
<accession>Q01037</accession>
<evidence type="ECO:0000255" key="1">
    <source>
        <dbReference type="HAMAP-Rule" id="MF_04026"/>
    </source>
</evidence>
<organism>
    <name type="scientific">Saimiriine herpesvirus 2 (strain 11)</name>
    <name type="common">SaHV-2</name>
    <name type="synonym">Herpesvirus saimiri</name>
    <dbReference type="NCBI Taxonomy" id="10383"/>
    <lineage>
        <taxon>Viruses</taxon>
        <taxon>Duplodnaviria</taxon>
        <taxon>Heunggongvirae</taxon>
        <taxon>Peploviricota</taxon>
        <taxon>Herviviricetes</taxon>
        <taxon>Herpesvirales</taxon>
        <taxon>Orthoherpesviridae</taxon>
        <taxon>Gammaherpesvirinae</taxon>
        <taxon>Rhadinovirus</taxon>
        <taxon>Rhadinovirus saimiriinegamma2</taxon>
        <taxon>Saimiriine herpesvirus 2</taxon>
    </lineage>
</organism>